<dbReference type="EMBL" id="X64733">
    <property type="protein sequence ID" value="CAA46000.1"/>
    <property type="molecule type" value="Genomic_DNA"/>
</dbReference>
<dbReference type="PIR" id="S30289">
    <property type="entry name" value="S30289"/>
</dbReference>
<dbReference type="RefSeq" id="WP_013068723.1">
    <property type="nucleotide sequence ID" value="NZ_VIBE01000005.1"/>
</dbReference>
<dbReference type="SMR" id="P37740"/>
<dbReference type="OMA" id="VHRTRIK"/>
<dbReference type="GO" id="GO:0005737">
    <property type="term" value="C:cytoplasm"/>
    <property type="evidence" value="ECO:0007669"/>
    <property type="project" value="UniProtKB-SubCell"/>
</dbReference>
<dbReference type="GO" id="GO:0003677">
    <property type="term" value="F:DNA binding"/>
    <property type="evidence" value="ECO:0007669"/>
    <property type="project" value="UniProtKB-KW"/>
</dbReference>
<dbReference type="GO" id="GO:0000160">
    <property type="term" value="P:phosphorelay signal transduction system"/>
    <property type="evidence" value="ECO:0007669"/>
    <property type="project" value="UniProtKB-KW"/>
</dbReference>
<dbReference type="GO" id="GO:0006355">
    <property type="term" value="P:regulation of DNA-templated transcription"/>
    <property type="evidence" value="ECO:0007669"/>
    <property type="project" value="InterPro"/>
</dbReference>
<dbReference type="CDD" id="cd06170">
    <property type="entry name" value="LuxR_C_like"/>
    <property type="match status" value="1"/>
</dbReference>
<dbReference type="CDD" id="cd17537">
    <property type="entry name" value="REC_FixJ"/>
    <property type="match status" value="1"/>
</dbReference>
<dbReference type="Gene3D" id="3.40.50.2300">
    <property type="match status" value="1"/>
</dbReference>
<dbReference type="Gene3D" id="1.10.10.10">
    <property type="entry name" value="Winged helix-like DNA-binding domain superfamily/Winged helix DNA-binding domain"/>
    <property type="match status" value="1"/>
</dbReference>
<dbReference type="InterPro" id="IPR011006">
    <property type="entry name" value="CheY-like_superfamily"/>
</dbReference>
<dbReference type="InterPro" id="IPR001789">
    <property type="entry name" value="Sig_transdc_resp-reg_receiver"/>
</dbReference>
<dbReference type="InterPro" id="IPR000792">
    <property type="entry name" value="Tscrpt_reg_LuxR_C"/>
</dbReference>
<dbReference type="InterPro" id="IPR036388">
    <property type="entry name" value="WH-like_DNA-bd_sf"/>
</dbReference>
<dbReference type="PANTHER" id="PTHR44688">
    <property type="entry name" value="DNA-BINDING TRANSCRIPTIONAL ACTIVATOR DEVR_DOSR"/>
    <property type="match status" value="1"/>
</dbReference>
<dbReference type="PANTHER" id="PTHR44688:SF16">
    <property type="entry name" value="DNA-BINDING TRANSCRIPTIONAL ACTIVATOR DEVR_DOSR"/>
    <property type="match status" value="1"/>
</dbReference>
<dbReference type="Pfam" id="PF00196">
    <property type="entry name" value="GerE"/>
    <property type="match status" value="1"/>
</dbReference>
<dbReference type="Pfam" id="PF00072">
    <property type="entry name" value="Response_reg"/>
    <property type="match status" value="1"/>
</dbReference>
<dbReference type="PRINTS" id="PR00038">
    <property type="entry name" value="HTHLUXR"/>
</dbReference>
<dbReference type="SMART" id="SM00421">
    <property type="entry name" value="HTH_LUXR"/>
    <property type="match status" value="1"/>
</dbReference>
<dbReference type="SMART" id="SM00448">
    <property type="entry name" value="REC"/>
    <property type="match status" value="1"/>
</dbReference>
<dbReference type="SUPFAM" id="SSF52172">
    <property type="entry name" value="CheY-like"/>
    <property type="match status" value="1"/>
</dbReference>
<dbReference type="PROSITE" id="PS00622">
    <property type="entry name" value="HTH_LUXR_1"/>
    <property type="match status" value="1"/>
</dbReference>
<dbReference type="PROSITE" id="PS50043">
    <property type="entry name" value="HTH_LUXR_2"/>
    <property type="match status" value="1"/>
</dbReference>
<dbReference type="PROSITE" id="PS50110">
    <property type="entry name" value="RESPONSE_REGULATORY"/>
    <property type="match status" value="1"/>
</dbReference>
<proteinExistence type="inferred from homology"/>
<organism>
    <name type="scientific">Rhodobacter capsulatus</name>
    <name type="common">Rhodopseudomonas capsulata</name>
    <dbReference type="NCBI Taxonomy" id="1061"/>
    <lineage>
        <taxon>Bacteria</taxon>
        <taxon>Pseudomonadati</taxon>
        <taxon>Pseudomonadota</taxon>
        <taxon>Alphaproteobacteria</taxon>
        <taxon>Rhodobacterales</taxon>
        <taxon>Rhodobacter group</taxon>
        <taxon>Rhodobacter</taxon>
    </lineage>
</organism>
<keyword id="KW-0010">Activator</keyword>
<keyword id="KW-0963">Cytoplasm</keyword>
<keyword id="KW-0238">DNA-binding</keyword>
<keyword id="KW-0597">Phosphoprotein</keyword>
<keyword id="KW-0804">Transcription</keyword>
<keyword id="KW-0805">Transcription regulation</keyword>
<keyword id="KW-0902">Two-component regulatory system</keyword>
<accession>P37740</accession>
<evidence type="ECO:0000255" key="1"/>
<evidence type="ECO:0000255" key="2">
    <source>
        <dbReference type="PROSITE-ProRule" id="PRU00169"/>
    </source>
</evidence>
<evidence type="ECO:0000255" key="3">
    <source>
        <dbReference type="PROSITE-ProRule" id="PRU00411"/>
    </source>
</evidence>
<evidence type="ECO:0000305" key="4"/>
<reference key="1">
    <citation type="journal article" date="1993" name="Mol. Gen. Genet.">
        <title>Sequence analysis and interposon mutagenesis of a sensor-kinase (DctS) and response-regulator (DctR) controlling synthesis of the high-affinity C4-dicarboxylate transport system in Rhodobacter capsulatus.</title>
        <authorList>
            <person name="Hamblin M.J."/>
            <person name="Shaw J.G."/>
            <person name="Kelly D.J."/>
        </authorList>
    </citation>
    <scope>NUCLEOTIDE SEQUENCE [GENOMIC DNA]</scope>
    <source>
        <strain>ATCC 33303 / B10</strain>
    </source>
</reference>
<comment type="function">
    <text>Member of the two-component regulatory system DctS/DctR involved in the transport of C4-dicarboxylates. DctR functions as a transcriptional repressor of genes for C4-dicarboxylate transport.</text>
</comment>
<comment type="subcellular location">
    <subcellularLocation>
        <location evidence="4">Cytoplasm</location>
    </subcellularLocation>
</comment>
<comment type="PTM">
    <text>Phosphorylated by DctS.</text>
</comment>
<name>DCTR_RHOCA</name>
<feature type="chain" id="PRO_0000081093" description="C4-dicarboxylate transport transcriptional regulatory protein DctR">
    <location>
        <begin position="1"/>
        <end position="197"/>
    </location>
</feature>
<feature type="domain" description="Response regulatory" evidence="2">
    <location>
        <begin position="4"/>
        <end position="120"/>
    </location>
</feature>
<feature type="domain" description="HTH luxR-type" evidence="3">
    <location>
        <begin position="136"/>
        <end position="197"/>
    </location>
</feature>
<feature type="DNA-binding region" description="H-T-H motif" evidence="3">
    <location>
        <begin position="160"/>
        <end position="179"/>
    </location>
</feature>
<feature type="region of interest" description="Inter-domain linker" evidence="1">
    <location>
        <begin position="128"/>
        <end position="135"/>
    </location>
</feature>
<feature type="modified residue" description="4-aspartylphosphate" evidence="2">
    <location>
        <position position="53"/>
    </location>
</feature>
<sequence>MSFTVHIVDDEESLRDSLGFLFASRGIATRTWAAGADLLAEWPLADCGCLILDVRMEGMSGPQLLDALQARPEGLVPPVIFLTGHADVPLAVQSLKAGAFDFVEKPFNDNHIVDIALSAIAAHEGRLAEAQAREAVAARRASLSAREAEVMALMLEGLMNKQIAERLGIAMRTVEVHRSRVLAKMGARNIADLARMT</sequence>
<protein>
    <recommendedName>
        <fullName>C4-dicarboxylate transport transcriptional regulatory protein DctR</fullName>
    </recommendedName>
</protein>
<gene>
    <name type="primary">dctR</name>
</gene>